<evidence type="ECO:0000305" key="1"/>
<accession>P54805</accession>
<dbReference type="EMBL" id="U32666">
    <property type="protein sequence ID" value="AAA96016.1"/>
    <property type="molecule type" value="Genomic_DNA"/>
</dbReference>
<dbReference type="SMR" id="P54805"/>
<dbReference type="GO" id="GO:0071949">
    <property type="term" value="F:FAD binding"/>
    <property type="evidence" value="ECO:0007669"/>
    <property type="project" value="InterPro"/>
</dbReference>
<dbReference type="Gene3D" id="3.50.50.60">
    <property type="entry name" value="FAD/NAD(P)-binding domain"/>
    <property type="match status" value="1"/>
</dbReference>
<dbReference type="InterPro" id="IPR002938">
    <property type="entry name" value="FAD-bd"/>
</dbReference>
<dbReference type="InterPro" id="IPR036188">
    <property type="entry name" value="FAD/NAD-bd_sf"/>
</dbReference>
<dbReference type="InterPro" id="IPR050407">
    <property type="entry name" value="Geranylgeranyl_reductase"/>
</dbReference>
<dbReference type="PANTHER" id="PTHR42685:SF18">
    <property type="entry name" value="DIGERANYLGERANYLGLYCEROPHOSPHOLIPID REDUCTASE"/>
    <property type="match status" value="1"/>
</dbReference>
<dbReference type="PANTHER" id="PTHR42685">
    <property type="entry name" value="GERANYLGERANYL DIPHOSPHATE REDUCTASE"/>
    <property type="match status" value="1"/>
</dbReference>
<dbReference type="Pfam" id="PF01494">
    <property type="entry name" value="FAD_binding_3"/>
    <property type="match status" value="1"/>
</dbReference>
<dbReference type="PRINTS" id="PR00420">
    <property type="entry name" value="RNGMNOXGNASE"/>
</dbReference>
<dbReference type="SUPFAM" id="SSF51905">
    <property type="entry name" value="FAD/NAD(P)-binding domain"/>
    <property type="match status" value="1"/>
</dbReference>
<protein>
    <recommendedName>
        <fullName>Uncharacterized protein in nifH2 5'region</fullName>
    </recommendedName>
    <alternativeName>
        <fullName>ORF186</fullName>
    </alternativeName>
</protein>
<comment type="similarity">
    <text evidence="1">Belongs to the geranylgeranyl reductase family. ChlP subfamily.</text>
</comment>
<organism>
    <name type="scientific">Methanosarcina barkeri</name>
    <dbReference type="NCBI Taxonomy" id="2208"/>
    <lineage>
        <taxon>Archaea</taxon>
        <taxon>Methanobacteriati</taxon>
        <taxon>Methanobacteriota</taxon>
        <taxon>Stenosarchaea group</taxon>
        <taxon>Methanomicrobia</taxon>
        <taxon>Methanosarcinales</taxon>
        <taxon>Methanosarcinaceae</taxon>
        <taxon>Methanosarcina</taxon>
    </lineage>
</organism>
<name>YNH2_METBA</name>
<proteinExistence type="inferred from homology"/>
<reference key="1">
    <citation type="journal article" date="1996" name="J. Bacteriol.">
        <title>Cloning, functional organization, transcript studies, and phylogenetic analysis of the complete nitrogenase structural genes (nifHDK2) and associated genes in the archaeon Methanosarcina barkeri 227.</title>
        <authorList>
            <person name="Chien Y.-T."/>
            <person name="Zinder S.H."/>
        </authorList>
    </citation>
    <scope>NUCLEOTIDE SEQUENCE [GENOMIC DNA]</scope>
    <source>
        <strain>ATCC 43241 / DSM 1538 / 227</strain>
    </source>
</reference>
<feature type="chain" id="PRO_0000219667" description="Uncharacterized protein in nifH2 5'region">
    <location>
        <begin position="1"/>
        <end position="186"/>
    </location>
</feature>
<sequence length="186" mass="19923">MIPEASYDVVVVGAGPAGSTAAMYAAKNGASVLLLDKKREIGSPIQCAGFLPDASEVQALLREAMLPDTLKNYPDSCVLQRIDNQRIFTPNCNIKEFAVRGAVLDRCRYDQFLAEQAARAGAELMIKTRVTKIEGTTVETSGVFGKYRIKAKAIIGADGPNSLVAKSKGLALTSGSRETRLLSNTR</sequence>